<comment type="function">
    <text evidence="1">Required for accurate and efficient protein synthesis under certain stress conditions. May act as a fidelity factor of the translation reaction, by catalyzing a one-codon backward translocation of tRNAs on improperly translocated ribosomes. Back-translocation proceeds from a post-translocation (POST) complex to a pre-translocation (PRE) complex, thus giving elongation factor G a second chance to translocate the tRNAs correctly. Binds to ribosomes in a GTP-dependent manner.</text>
</comment>
<comment type="catalytic activity">
    <reaction evidence="1">
        <text>GTP + H2O = GDP + phosphate + H(+)</text>
        <dbReference type="Rhea" id="RHEA:19669"/>
        <dbReference type="ChEBI" id="CHEBI:15377"/>
        <dbReference type="ChEBI" id="CHEBI:15378"/>
        <dbReference type="ChEBI" id="CHEBI:37565"/>
        <dbReference type="ChEBI" id="CHEBI:43474"/>
        <dbReference type="ChEBI" id="CHEBI:58189"/>
        <dbReference type="EC" id="3.6.5.n1"/>
    </reaction>
</comment>
<comment type="subcellular location">
    <subcellularLocation>
        <location evidence="1">Cell inner membrane</location>
        <topology evidence="1">Peripheral membrane protein</topology>
        <orientation evidence="1">Cytoplasmic side</orientation>
    </subcellularLocation>
</comment>
<comment type="similarity">
    <text evidence="1">Belongs to the TRAFAC class translation factor GTPase superfamily. Classic translation factor GTPase family. LepA subfamily.</text>
</comment>
<accession>Q8YU48</accession>
<gene>
    <name evidence="1" type="primary">lepA</name>
    <name type="ordered locus">all2508</name>
</gene>
<protein>
    <recommendedName>
        <fullName evidence="1">Elongation factor 4</fullName>
        <shortName evidence="1">EF-4</shortName>
        <ecNumber evidence="1">3.6.5.n1</ecNumber>
    </recommendedName>
    <alternativeName>
        <fullName evidence="1">Ribosomal back-translocase LepA</fullName>
    </alternativeName>
</protein>
<feature type="chain" id="PRO_0000176222" description="Elongation factor 4">
    <location>
        <begin position="1"/>
        <end position="603"/>
    </location>
</feature>
<feature type="domain" description="tr-type G">
    <location>
        <begin position="7"/>
        <end position="189"/>
    </location>
</feature>
<feature type="binding site" evidence="1">
    <location>
        <begin position="19"/>
        <end position="24"/>
    </location>
    <ligand>
        <name>GTP</name>
        <dbReference type="ChEBI" id="CHEBI:37565"/>
    </ligand>
</feature>
<feature type="binding site" evidence="1">
    <location>
        <begin position="136"/>
        <end position="139"/>
    </location>
    <ligand>
        <name>GTP</name>
        <dbReference type="ChEBI" id="CHEBI:37565"/>
    </ligand>
</feature>
<dbReference type="EC" id="3.6.5.n1" evidence="1"/>
<dbReference type="EMBL" id="BA000019">
    <property type="protein sequence ID" value="BAB74207.1"/>
    <property type="molecule type" value="Genomic_DNA"/>
</dbReference>
<dbReference type="PIR" id="AE2119">
    <property type="entry name" value="AE2119"/>
</dbReference>
<dbReference type="RefSeq" id="WP_010996664.1">
    <property type="nucleotide sequence ID" value="NZ_RSCN01000002.1"/>
</dbReference>
<dbReference type="SMR" id="Q8YU48"/>
<dbReference type="STRING" id="103690.gene:10494539"/>
<dbReference type="KEGG" id="ana:all2508"/>
<dbReference type="eggNOG" id="COG0481">
    <property type="taxonomic scope" value="Bacteria"/>
</dbReference>
<dbReference type="OrthoDB" id="580826at2"/>
<dbReference type="Proteomes" id="UP000002483">
    <property type="component" value="Chromosome"/>
</dbReference>
<dbReference type="GO" id="GO:0005886">
    <property type="term" value="C:plasma membrane"/>
    <property type="evidence" value="ECO:0007669"/>
    <property type="project" value="UniProtKB-SubCell"/>
</dbReference>
<dbReference type="GO" id="GO:0005525">
    <property type="term" value="F:GTP binding"/>
    <property type="evidence" value="ECO:0007669"/>
    <property type="project" value="UniProtKB-KW"/>
</dbReference>
<dbReference type="GO" id="GO:0003924">
    <property type="term" value="F:GTPase activity"/>
    <property type="evidence" value="ECO:0007669"/>
    <property type="project" value="InterPro"/>
</dbReference>
<dbReference type="GO" id="GO:0043022">
    <property type="term" value="F:ribosome binding"/>
    <property type="evidence" value="ECO:0007669"/>
    <property type="project" value="TreeGrafter"/>
</dbReference>
<dbReference type="GO" id="GO:0045727">
    <property type="term" value="P:positive regulation of translation"/>
    <property type="evidence" value="ECO:0007669"/>
    <property type="project" value="TreeGrafter"/>
</dbReference>
<dbReference type="GO" id="GO:0006412">
    <property type="term" value="P:translation"/>
    <property type="evidence" value="ECO:0007669"/>
    <property type="project" value="UniProtKB-KW"/>
</dbReference>
<dbReference type="CDD" id="cd03699">
    <property type="entry name" value="EF4_II"/>
    <property type="match status" value="1"/>
</dbReference>
<dbReference type="CDD" id="cd16260">
    <property type="entry name" value="EF4_III"/>
    <property type="match status" value="1"/>
</dbReference>
<dbReference type="CDD" id="cd01890">
    <property type="entry name" value="LepA"/>
    <property type="match status" value="1"/>
</dbReference>
<dbReference type="CDD" id="cd03709">
    <property type="entry name" value="lepA_C"/>
    <property type="match status" value="1"/>
</dbReference>
<dbReference type="FunFam" id="3.40.50.300:FF:000078">
    <property type="entry name" value="Elongation factor 4"/>
    <property type="match status" value="1"/>
</dbReference>
<dbReference type="FunFam" id="2.40.30.10:FF:000015">
    <property type="entry name" value="Translation factor GUF1, mitochondrial"/>
    <property type="match status" value="1"/>
</dbReference>
<dbReference type="FunFam" id="3.30.70.240:FF:000007">
    <property type="entry name" value="Translation factor GUF1, mitochondrial"/>
    <property type="match status" value="1"/>
</dbReference>
<dbReference type="FunFam" id="3.30.70.2570:FF:000001">
    <property type="entry name" value="Translation factor GUF1, mitochondrial"/>
    <property type="match status" value="1"/>
</dbReference>
<dbReference type="FunFam" id="3.30.70.870:FF:000004">
    <property type="entry name" value="Translation factor GUF1, mitochondrial"/>
    <property type="match status" value="1"/>
</dbReference>
<dbReference type="Gene3D" id="3.30.70.240">
    <property type="match status" value="1"/>
</dbReference>
<dbReference type="Gene3D" id="3.30.70.2570">
    <property type="entry name" value="Elongation factor 4, C-terminal domain"/>
    <property type="match status" value="1"/>
</dbReference>
<dbReference type="Gene3D" id="3.30.70.870">
    <property type="entry name" value="Elongation Factor G (Translational Gtpase), domain 3"/>
    <property type="match status" value="1"/>
</dbReference>
<dbReference type="Gene3D" id="3.40.50.300">
    <property type="entry name" value="P-loop containing nucleotide triphosphate hydrolases"/>
    <property type="match status" value="1"/>
</dbReference>
<dbReference type="Gene3D" id="2.40.30.10">
    <property type="entry name" value="Translation factors"/>
    <property type="match status" value="1"/>
</dbReference>
<dbReference type="HAMAP" id="MF_03138">
    <property type="entry name" value="GUFP"/>
    <property type="match status" value="1"/>
</dbReference>
<dbReference type="HAMAP" id="MF_00071">
    <property type="entry name" value="LepA"/>
    <property type="match status" value="1"/>
</dbReference>
<dbReference type="InterPro" id="IPR006297">
    <property type="entry name" value="EF-4"/>
</dbReference>
<dbReference type="InterPro" id="IPR035647">
    <property type="entry name" value="EFG_III/V"/>
</dbReference>
<dbReference type="InterPro" id="IPR000640">
    <property type="entry name" value="EFG_V-like"/>
</dbReference>
<dbReference type="InterPro" id="IPR004161">
    <property type="entry name" value="EFTu-like_2"/>
</dbReference>
<dbReference type="InterPro" id="IPR031157">
    <property type="entry name" value="G_TR_CS"/>
</dbReference>
<dbReference type="InterPro" id="IPR027518">
    <property type="entry name" value="GUFP"/>
</dbReference>
<dbReference type="InterPro" id="IPR038363">
    <property type="entry name" value="LepA_C_sf"/>
</dbReference>
<dbReference type="InterPro" id="IPR013842">
    <property type="entry name" value="LepA_CTD"/>
</dbReference>
<dbReference type="InterPro" id="IPR035654">
    <property type="entry name" value="LepA_IV"/>
</dbReference>
<dbReference type="InterPro" id="IPR027417">
    <property type="entry name" value="P-loop_NTPase"/>
</dbReference>
<dbReference type="InterPro" id="IPR005225">
    <property type="entry name" value="Small_GTP-bd"/>
</dbReference>
<dbReference type="InterPro" id="IPR000795">
    <property type="entry name" value="T_Tr_GTP-bd_dom"/>
</dbReference>
<dbReference type="NCBIfam" id="TIGR01393">
    <property type="entry name" value="lepA"/>
    <property type="match status" value="1"/>
</dbReference>
<dbReference type="NCBIfam" id="TIGR00231">
    <property type="entry name" value="small_GTP"/>
    <property type="match status" value="1"/>
</dbReference>
<dbReference type="PANTHER" id="PTHR43512:SF4">
    <property type="entry name" value="TRANSLATION FACTOR GUF1 HOMOLOG, CHLOROPLASTIC"/>
    <property type="match status" value="1"/>
</dbReference>
<dbReference type="PANTHER" id="PTHR43512">
    <property type="entry name" value="TRANSLATION FACTOR GUF1-RELATED"/>
    <property type="match status" value="1"/>
</dbReference>
<dbReference type="Pfam" id="PF00679">
    <property type="entry name" value="EFG_C"/>
    <property type="match status" value="1"/>
</dbReference>
<dbReference type="Pfam" id="PF00009">
    <property type="entry name" value="GTP_EFTU"/>
    <property type="match status" value="1"/>
</dbReference>
<dbReference type="Pfam" id="PF03144">
    <property type="entry name" value="GTP_EFTU_D2"/>
    <property type="match status" value="1"/>
</dbReference>
<dbReference type="Pfam" id="PF06421">
    <property type="entry name" value="LepA_C"/>
    <property type="match status" value="1"/>
</dbReference>
<dbReference type="PRINTS" id="PR00315">
    <property type="entry name" value="ELONGATNFCT"/>
</dbReference>
<dbReference type="SMART" id="SM00838">
    <property type="entry name" value="EFG_C"/>
    <property type="match status" value="1"/>
</dbReference>
<dbReference type="SUPFAM" id="SSF54980">
    <property type="entry name" value="EF-G C-terminal domain-like"/>
    <property type="match status" value="2"/>
</dbReference>
<dbReference type="SUPFAM" id="SSF52540">
    <property type="entry name" value="P-loop containing nucleoside triphosphate hydrolases"/>
    <property type="match status" value="1"/>
</dbReference>
<dbReference type="PROSITE" id="PS00301">
    <property type="entry name" value="G_TR_1"/>
    <property type="match status" value="1"/>
</dbReference>
<dbReference type="PROSITE" id="PS51722">
    <property type="entry name" value="G_TR_2"/>
    <property type="match status" value="1"/>
</dbReference>
<sequence>MTDVPAVRIRNFCIIAHIDHGKSTLADRLLQATGTVDERQMKEQFLDNMDLERERGITIKLQAARMNYQAKDGQQYVLNLIDTPGHVDFSYEVSRSLAACEGALLVVDASQGVEAQTLANVYLALEHNLEIIPVLNKIDLPGAEPDRVVGEIEEIIGLDCSGAILASAKEGIGINEILEAVVERVPPPPNTVDQRLRALIFDSYYDIYRGVIVYFRVMDGTVKKGDRVYLMASEKEYEIDELGVLSPTQKPVNELHAGEVGYFGAAIKAVADARVGDTITLCNAKATEALPGYTEANPMVFCGMFPIDADQFEDLREALEKLRLNDAALQYEPETSSAMGFGFRCGFLGLLHMEIVQERLEREYDLDLIITAPSVVYKVITTKGEELYIDNPSHLPAPNDRERIEEPYVKVEMITPETYVGTLMELSQNRRGIFKDMKYLTQGRTTLTYEIPLAEVVTDFFDQMKSRSRGYASMEYHLIGYRENPLVKLDIMINGDPVDSLAMIVHRDKAYGMGRSMAEKLKELIPRHQFKVPIQASIGSKVIASEHIPALRKDVLAKCYGGDISRKKKLLQKQAKGKKRMKSVGTVDVPQEAFMAVLRLDQS</sequence>
<name>LEPA_NOSS1</name>
<proteinExistence type="inferred from homology"/>
<evidence type="ECO:0000255" key="1">
    <source>
        <dbReference type="HAMAP-Rule" id="MF_00071"/>
    </source>
</evidence>
<keyword id="KW-0997">Cell inner membrane</keyword>
<keyword id="KW-1003">Cell membrane</keyword>
<keyword id="KW-0342">GTP-binding</keyword>
<keyword id="KW-0378">Hydrolase</keyword>
<keyword id="KW-0472">Membrane</keyword>
<keyword id="KW-0547">Nucleotide-binding</keyword>
<keyword id="KW-0648">Protein biosynthesis</keyword>
<keyword id="KW-1185">Reference proteome</keyword>
<reference key="1">
    <citation type="journal article" date="2001" name="DNA Res.">
        <title>Complete genomic sequence of the filamentous nitrogen-fixing cyanobacterium Anabaena sp. strain PCC 7120.</title>
        <authorList>
            <person name="Kaneko T."/>
            <person name="Nakamura Y."/>
            <person name="Wolk C.P."/>
            <person name="Kuritz T."/>
            <person name="Sasamoto S."/>
            <person name="Watanabe A."/>
            <person name="Iriguchi M."/>
            <person name="Ishikawa A."/>
            <person name="Kawashima K."/>
            <person name="Kimura T."/>
            <person name="Kishida Y."/>
            <person name="Kohara M."/>
            <person name="Matsumoto M."/>
            <person name="Matsuno A."/>
            <person name="Muraki A."/>
            <person name="Nakazaki N."/>
            <person name="Shimpo S."/>
            <person name="Sugimoto M."/>
            <person name="Takazawa M."/>
            <person name="Yamada M."/>
            <person name="Yasuda M."/>
            <person name="Tabata S."/>
        </authorList>
    </citation>
    <scope>NUCLEOTIDE SEQUENCE [LARGE SCALE GENOMIC DNA]</scope>
    <source>
        <strain>PCC 7120 / SAG 25.82 / UTEX 2576</strain>
    </source>
</reference>
<organism>
    <name type="scientific">Nostoc sp. (strain PCC 7120 / SAG 25.82 / UTEX 2576)</name>
    <dbReference type="NCBI Taxonomy" id="103690"/>
    <lineage>
        <taxon>Bacteria</taxon>
        <taxon>Bacillati</taxon>
        <taxon>Cyanobacteriota</taxon>
        <taxon>Cyanophyceae</taxon>
        <taxon>Nostocales</taxon>
        <taxon>Nostocaceae</taxon>
        <taxon>Nostoc</taxon>
    </lineage>
</organism>